<feature type="chain" id="PRO_0000189681" description="Gamma-glutamyl phosphate reductase">
    <location>
        <begin position="1"/>
        <end position="421"/>
    </location>
</feature>
<protein>
    <recommendedName>
        <fullName evidence="1">Gamma-glutamyl phosphate reductase</fullName>
        <shortName evidence="1">GPR</shortName>
        <ecNumber evidence="1">1.2.1.41</ecNumber>
    </recommendedName>
    <alternativeName>
        <fullName evidence="1">Glutamate-5-semialdehyde dehydrogenase</fullName>
    </alternativeName>
    <alternativeName>
        <fullName evidence="1">Glutamyl-gamma-semialdehyde dehydrogenase</fullName>
        <shortName evidence="1">GSA dehydrogenase</shortName>
    </alternativeName>
</protein>
<keyword id="KW-0028">Amino-acid biosynthesis</keyword>
<keyword id="KW-0963">Cytoplasm</keyword>
<keyword id="KW-0521">NADP</keyword>
<keyword id="KW-0560">Oxidoreductase</keyword>
<keyword id="KW-0641">Proline biosynthesis</keyword>
<proteinExistence type="inferred from homology"/>
<dbReference type="EC" id="1.2.1.41" evidence="1"/>
<dbReference type="EMBL" id="CR543861">
    <property type="protein sequence ID" value="CAG67473.1"/>
    <property type="molecule type" value="Genomic_DNA"/>
</dbReference>
<dbReference type="RefSeq" id="WP_004920029.1">
    <property type="nucleotide sequence ID" value="NC_005966.1"/>
</dbReference>
<dbReference type="SMR" id="Q6FEN5"/>
<dbReference type="STRING" id="202950.GCA_001485005_00785"/>
<dbReference type="GeneID" id="45233026"/>
<dbReference type="KEGG" id="aci:ACIAD0547"/>
<dbReference type="eggNOG" id="COG0014">
    <property type="taxonomic scope" value="Bacteria"/>
</dbReference>
<dbReference type="HOGENOM" id="CLU_030231_0_0_6"/>
<dbReference type="OrthoDB" id="9809970at2"/>
<dbReference type="BioCyc" id="ASP62977:ACIAD_RS02490-MONOMER"/>
<dbReference type="UniPathway" id="UPA00098">
    <property type="reaction ID" value="UER00360"/>
</dbReference>
<dbReference type="Proteomes" id="UP000000430">
    <property type="component" value="Chromosome"/>
</dbReference>
<dbReference type="GO" id="GO:0005737">
    <property type="term" value="C:cytoplasm"/>
    <property type="evidence" value="ECO:0007669"/>
    <property type="project" value="UniProtKB-SubCell"/>
</dbReference>
<dbReference type="GO" id="GO:0004350">
    <property type="term" value="F:glutamate-5-semialdehyde dehydrogenase activity"/>
    <property type="evidence" value="ECO:0007669"/>
    <property type="project" value="UniProtKB-UniRule"/>
</dbReference>
<dbReference type="GO" id="GO:0050661">
    <property type="term" value="F:NADP binding"/>
    <property type="evidence" value="ECO:0007669"/>
    <property type="project" value="InterPro"/>
</dbReference>
<dbReference type="GO" id="GO:0055129">
    <property type="term" value="P:L-proline biosynthetic process"/>
    <property type="evidence" value="ECO:0007669"/>
    <property type="project" value="UniProtKB-UniRule"/>
</dbReference>
<dbReference type="CDD" id="cd07079">
    <property type="entry name" value="ALDH_F18-19_ProA-GPR"/>
    <property type="match status" value="1"/>
</dbReference>
<dbReference type="FunFam" id="3.40.309.10:FF:000006">
    <property type="entry name" value="Gamma-glutamyl phosphate reductase"/>
    <property type="match status" value="1"/>
</dbReference>
<dbReference type="Gene3D" id="3.40.605.10">
    <property type="entry name" value="Aldehyde Dehydrogenase, Chain A, domain 1"/>
    <property type="match status" value="1"/>
</dbReference>
<dbReference type="Gene3D" id="3.40.309.10">
    <property type="entry name" value="Aldehyde Dehydrogenase, Chain A, domain 2"/>
    <property type="match status" value="1"/>
</dbReference>
<dbReference type="HAMAP" id="MF_00412">
    <property type="entry name" value="ProA"/>
    <property type="match status" value="1"/>
</dbReference>
<dbReference type="InterPro" id="IPR016161">
    <property type="entry name" value="Ald_DH/histidinol_DH"/>
</dbReference>
<dbReference type="InterPro" id="IPR016163">
    <property type="entry name" value="Ald_DH_C"/>
</dbReference>
<dbReference type="InterPro" id="IPR016162">
    <property type="entry name" value="Ald_DH_N"/>
</dbReference>
<dbReference type="InterPro" id="IPR015590">
    <property type="entry name" value="Aldehyde_DH_dom"/>
</dbReference>
<dbReference type="InterPro" id="IPR020593">
    <property type="entry name" value="G-glutamylP_reductase_CS"/>
</dbReference>
<dbReference type="InterPro" id="IPR012134">
    <property type="entry name" value="Glu-5-SA_DH"/>
</dbReference>
<dbReference type="InterPro" id="IPR000965">
    <property type="entry name" value="GPR_dom"/>
</dbReference>
<dbReference type="NCBIfam" id="NF001221">
    <property type="entry name" value="PRK00197.1"/>
    <property type="match status" value="1"/>
</dbReference>
<dbReference type="NCBIfam" id="TIGR00407">
    <property type="entry name" value="proA"/>
    <property type="match status" value="1"/>
</dbReference>
<dbReference type="PANTHER" id="PTHR11063:SF8">
    <property type="entry name" value="DELTA-1-PYRROLINE-5-CARBOXYLATE SYNTHASE"/>
    <property type="match status" value="1"/>
</dbReference>
<dbReference type="PANTHER" id="PTHR11063">
    <property type="entry name" value="GLUTAMATE SEMIALDEHYDE DEHYDROGENASE"/>
    <property type="match status" value="1"/>
</dbReference>
<dbReference type="Pfam" id="PF00171">
    <property type="entry name" value="Aldedh"/>
    <property type="match status" value="2"/>
</dbReference>
<dbReference type="PIRSF" id="PIRSF000151">
    <property type="entry name" value="GPR"/>
    <property type="match status" value="1"/>
</dbReference>
<dbReference type="SUPFAM" id="SSF53720">
    <property type="entry name" value="ALDH-like"/>
    <property type="match status" value="1"/>
</dbReference>
<dbReference type="PROSITE" id="PS01223">
    <property type="entry name" value="PROA"/>
    <property type="match status" value="1"/>
</dbReference>
<gene>
    <name evidence="1" type="primary">proA</name>
    <name type="ordered locus">ACIAD0547</name>
</gene>
<sequence length="421" mass="46059">MQDSIEQYMQAVGQQARKASRVLSSASTHTKNNALSAIYTALVNHEPEILAANAVDMQKGRDSHLDSALLDRLELTPTRFKGMLQGLKDVIALTDPIGEITDLAYRPSGIQLGKMRVPLGVIGMIYESRPNVTLEAASLALKSGNAIILRGGSEALQSNKAIATAIQHGLKVAGLPEHAIQVIETADRAAVGQLITMTEYVDVIVPRGGKSLIERISNEARIPVIKHLDGNCHVFIDVEADLHKALPIALNAKTHRYGVCNAMETLLVHEEIAEEFLPRIAELYAEKHVELRGCQETRRILGSSVKTATEEDWYTEYLAPILAIKVVEHIDQAIEHINKYGSHHTDAIVTENYSKVRKFLAEVDSSSVMINASTRFADGFEYGLGAEIGISTDKIHARGPVGLEGLTSQKWIVFGDGQIRH</sequence>
<name>PROA_ACIAD</name>
<accession>Q6FEN5</accession>
<reference key="1">
    <citation type="journal article" date="2004" name="Nucleic Acids Res.">
        <title>Unique features revealed by the genome sequence of Acinetobacter sp. ADP1, a versatile and naturally transformation competent bacterium.</title>
        <authorList>
            <person name="Barbe V."/>
            <person name="Vallenet D."/>
            <person name="Fonknechten N."/>
            <person name="Kreimeyer A."/>
            <person name="Oztas S."/>
            <person name="Labarre L."/>
            <person name="Cruveiller S."/>
            <person name="Robert C."/>
            <person name="Duprat S."/>
            <person name="Wincker P."/>
            <person name="Ornston L.N."/>
            <person name="Weissenbach J."/>
            <person name="Marliere P."/>
            <person name="Cohen G.N."/>
            <person name="Medigue C."/>
        </authorList>
    </citation>
    <scope>NUCLEOTIDE SEQUENCE [LARGE SCALE GENOMIC DNA]</scope>
    <source>
        <strain>ATCC 33305 / BD413 / ADP1</strain>
    </source>
</reference>
<organism>
    <name type="scientific">Acinetobacter baylyi (strain ATCC 33305 / BD413 / ADP1)</name>
    <dbReference type="NCBI Taxonomy" id="62977"/>
    <lineage>
        <taxon>Bacteria</taxon>
        <taxon>Pseudomonadati</taxon>
        <taxon>Pseudomonadota</taxon>
        <taxon>Gammaproteobacteria</taxon>
        <taxon>Moraxellales</taxon>
        <taxon>Moraxellaceae</taxon>
        <taxon>Acinetobacter</taxon>
    </lineage>
</organism>
<comment type="function">
    <text evidence="1">Catalyzes the NADPH-dependent reduction of L-glutamate 5-phosphate into L-glutamate 5-semialdehyde and phosphate. The product spontaneously undergoes cyclization to form 1-pyrroline-5-carboxylate.</text>
</comment>
<comment type="catalytic activity">
    <reaction evidence="1">
        <text>L-glutamate 5-semialdehyde + phosphate + NADP(+) = L-glutamyl 5-phosphate + NADPH + H(+)</text>
        <dbReference type="Rhea" id="RHEA:19541"/>
        <dbReference type="ChEBI" id="CHEBI:15378"/>
        <dbReference type="ChEBI" id="CHEBI:43474"/>
        <dbReference type="ChEBI" id="CHEBI:57783"/>
        <dbReference type="ChEBI" id="CHEBI:58066"/>
        <dbReference type="ChEBI" id="CHEBI:58274"/>
        <dbReference type="ChEBI" id="CHEBI:58349"/>
        <dbReference type="EC" id="1.2.1.41"/>
    </reaction>
</comment>
<comment type="pathway">
    <text evidence="1">Amino-acid biosynthesis; L-proline biosynthesis; L-glutamate 5-semialdehyde from L-glutamate: step 2/2.</text>
</comment>
<comment type="subcellular location">
    <subcellularLocation>
        <location evidence="1">Cytoplasm</location>
    </subcellularLocation>
</comment>
<comment type="similarity">
    <text evidence="1">Belongs to the gamma-glutamyl phosphate reductase family.</text>
</comment>
<evidence type="ECO:0000255" key="1">
    <source>
        <dbReference type="HAMAP-Rule" id="MF_00412"/>
    </source>
</evidence>